<dbReference type="EMBL" id="AE004969">
    <property type="protein sequence ID" value="AAW90445.1"/>
    <property type="molecule type" value="Genomic_DNA"/>
</dbReference>
<dbReference type="RefSeq" id="WP_010951357.1">
    <property type="nucleotide sequence ID" value="NC_002946.2"/>
</dbReference>
<dbReference type="RefSeq" id="YP_208857.1">
    <property type="nucleotide sequence ID" value="NC_002946.2"/>
</dbReference>
<dbReference type="SMR" id="Q5F5U2"/>
<dbReference type="STRING" id="242231.NGO_1825"/>
<dbReference type="KEGG" id="ngo:NGO_1825"/>
<dbReference type="PATRIC" id="fig|242231.10.peg.2194"/>
<dbReference type="HOGENOM" id="CLU_065464_1_2_4"/>
<dbReference type="Proteomes" id="UP000000535">
    <property type="component" value="Chromosome"/>
</dbReference>
<dbReference type="GO" id="GO:0022625">
    <property type="term" value="C:cytosolic large ribosomal subunit"/>
    <property type="evidence" value="ECO:0007669"/>
    <property type="project" value="TreeGrafter"/>
</dbReference>
<dbReference type="GO" id="GO:0019843">
    <property type="term" value="F:rRNA binding"/>
    <property type="evidence" value="ECO:0007669"/>
    <property type="project" value="UniProtKB-UniRule"/>
</dbReference>
<dbReference type="GO" id="GO:0003735">
    <property type="term" value="F:structural constituent of ribosome"/>
    <property type="evidence" value="ECO:0007669"/>
    <property type="project" value="InterPro"/>
</dbReference>
<dbReference type="GO" id="GO:0002181">
    <property type="term" value="P:cytoplasmic translation"/>
    <property type="evidence" value="ECO:0007669"/>
    <property type="project" value="TreeGrafter"/>
</dbReference>
<dbReference type="FunFam" id="3.90.930.12:FF:000001">
    <property type="entry name" value="50S ribosomal protein L6"/>
    <property type="match status" value="1"/>
</dbReference>
<dbReference type="FunFam" id="3.90.930.12:FF:000002">
    <property type="entry name" value="50S ribosomal protein L6"/>
    <property type="match status" value="1"/>
</dbReference>
<dbReference type="Gene3D" id="3.90.930.12">
    <property type="entry name" value="Ribosomal protein L6, alpha-beta domain"/>
    <property type="match status" value="2"/>
</dbReference>
<dbReference type="HAMAP" id="MF_01365_B">
    <property type="entry name" value="Ribosomal_uL6_B"/>
    <property type="match status" value="1"/>
</dbReference>
<dbReference type="InterPro" id="IPR000702">
    <property type="entry name" value="Ribosomal_uL6-like"/>
</dbReference>
<dbReference type="InterPro" id="IPR036789">
    <property type="entry name" value="Ribosomal_uL6-like_a/b-dom_sf"/>
</dbReference>
<dbReference type="InterPro" id="IPR020040">
    <property type="entry name" value="Ribosomal_uL6_a/b-dom"/>
</dbReference>
<dbReference type="InterPro" id="IPR019906">
    <property type="entry name" value="Ribosomal_uL6_bac-type"/>
</dbReference>
<dbReference type="InterPro" id="IPR002358">
    <property type="entry name" value="Ribosomal_uL6_CS"/>
</dbReference>
<dbReference type="NCBIfam" id="TIGR03654">
    <property type="entry name" value="L6_bact"/>
    <property type="match status" value="1"/>
</dbReference>
<dbReference type="PANTHER" id="PTHR11655">
    <property type="entry name" value="60S/50S RIBOSOMAL PROTEIN L6/L9"/>
    <property type="match status" value="1"/>
</dbReference>
<dbReference type="PANTHER" id="PTHR11655:SF14">
    <property type="entry name" value="LARGE RIBOSOMAL SUBUNIT PROTEIN UL6M"/>
    <property type="match status" value="1"/>
</dbReference>
<dbReference type="Pfam" id="PF00347">
    <property type="entry name" value="Ribosomal_L6"/>
    <property type="match status" value="2"/>
</dbReference>
<dbReference type="PIRSF" id="PIRSF002162">
    <property type="entry name" value="Ribosomal_L6"/>
    <property type="match status" value="1"/>
</dbReference>
<dbReference type="PRINTS" id="PR00059">
    <property type="entry name" value="RIBOSOMALL6"/>
</dbReference>
<dbReference type="SUPFAM" id="SSF56053">
    <property type="entry name" value="Ribosomal protein L6"/>
    <property type="match status" value="2"/>
</dbReference>
<dbReference type="PROSITE" id="PS00525">
    <property type="entry name" value="RIBOSOMAL_L6_1"/>
    <property type="match status" value="1"/>
</dbReference>
<accession>Q5F5U2</accession>
<keyword id="KW-1185">Reference proteome</keyword>
<keyword id="KW-0687">Ribonucleoprotein</keyword>
<keyword id="KW-0689">Ribosomal protein</keyword>
<keyword id="KW-0694">RNA-binding</keyword>
<keyword id="KW-0699">rRNA-binding</keyword>
<organism>
    <name type="scientific">Neisseria gonorrhoeae (strain ATCC 700825 / FA 1090)</name>
    <dbReference type="NCBI Taxonomy" id="242231"/>
    <lineage>
        <taxon>Bacteria</taxon>
        <taxon>Pseudomonadati</taxon>
        <taxon>Pseudomonadota</taxon>
        <taxon>Betaproteobacteria</taxon>
        <taxon>Neisseriales</taxon>
        <taxon>Neisseriaceae</taxon>
        <taxon>Neisseria</taxon>
    </lineage>
</organism>
<gene>
    <name evidence="1" type="primary">rplF</name>
    <name type="ordered locus">NGO_1825</name>
</gene>
<evidence type="ECO:0000255" key="1">
    <source>
        <dbReference type="HAMAP-Rule" id="MF_01365"/>
    </source>
</evidence>
<evidence type="ECO:0000305" key="2"/>
<comment type="function">
    <text evidence="1">This protein binds to the 23S rRNA, and is important in its secondary structure. It is located near the subunit interface in the base of the L7/L12 stalk, and near the tRNA binding site of the peptidyltransferase center.</text>
</comment>
<comment type="subunit">
    <text evidence="1">Part of the 50S ribosomal subunit.</text>
</comment>
<comment type="similarity">
    <text evidence="1">Belongs to the universal ribosomal protein uL6 family.</text>
</comment>
<reference key="1">
    <citation type="submission" date="2003-03" db="EMBL/GenBank/DDBJ databases">
        <title>The complete genome sequence of Neisseria gonorrhoeae.</title>
        <authorList>
            <person name="Lewis L.A."/>
            <person name="Gillaspy A.F."/>
            <person name="McLaughlin R.E."/>
            <person name="Gipson M."/>
            <person name="Ducey T.F."/>
            <person name="Ownbey T."/>
            <person name="Hartman K."/>
            <person name="Nydick C."/>
            <person name="Carson M.B."/>
            <person name="Vaughn J."/>
            <person name="Thomson C."/>
            <person name="Song L."/>
            <person name="Lin S."/>
            <person name="Yuan X."/>
            <person name="Najar F."/>
            <person name="Zhan M."/>
            <person name="Ren Q."/>
            <person name="Zhu H."/>
            <person name="Qi S."/>
            <person name="Kenton S.M."/>
            <person name="Lai H."/>
            <person name="White J.D."/>
            <person name="Clifton S."/>
            <person name="Roe B.A."/>
            <person name="Dyer D.W."/>
        </authorList>
    </citation>
    <scope>NUCLEOTIDE SEQUENCE [LARGE SCALE GENOMIC DNA]</scope>
    <source>
        <strain>ATCC 700825 / FA 1090</strain>
    </source>
</reference>
<proteinExistence type="inferred from homology"/>
<name>RL6_NEIG1</name>
<protein>
    <recommendedName>
        <fullName evidence="1">Large ribosomal subunit protein uL6</fullName>
    </recommendedName>
    <alternativeName>
        <fullName evidence="2">50S ribosomal protein L6</fullName>
    </alternativeName>
</protein>
<sequence>MSRVAKNPVTVPAGVEVKFGTEALVIKGKNGELSFPLHSDVAIEFNDGKLTFVANNSSKQANAMSGTARALVSNMVKGVSEGFEKKLQLMGVGYRAQAQGKILNLSLGFSHPIVYEMPEGVSVQTPSQTEIVLTGSDKQVVGQVASEIRAFRAPEPYKGKGVRYVGEVVVMKEAKKK</sequence>
<feature type="chain" id="PRO_0000260899" description="Large ribosomal subunit protein uL6">
    <location>
        <begin position="1"/>
        <end position="177"/>
    </location>
</feature>